<protein>
    <recommendedName>
        <fullName evidence="1">Small ribosomal subunit protein uS3</fullName>
    </recommendedName>
    <alternativeName>
        <fullName evidence="3">30S ribosomal protein S3</fullName>
    </alternativeName>
</protein>
<comment type="function">
    <text evidence="1">Binds the lower part of the 30S subunit head. Binds mRNA in the 70S ribosome, positioning it for translation.</text>
</comment>
<comment type="subunit">
    <text evidence="1">Part of the 30S ribosomal subunit. Forms a tight complex with proteins S10 and S14.</text>
</comment>
<comment type="similarity">
    <text evidence="1">Belongs to the universal ribosomal protein uS3 family.</text>
</comment>
<reference key="1">
    <citation type="journal article" date="2003" name="Science">
        <title>A genomic view of the human-Bacteroides thetaiotaomicron symbiosis.</title>
        <authorList>
            <person name="Xu J."/>
            <person name="Bjursell M.K."/>
            <person name="Himrod J."/>
            <person name="Deng S."/>
            <person name="Carmichael L.K."/>
            <person name="Chiang H.C."/>
            <person name="Hooper L.V."/>
            <person name="Gordon J.I."/>
        </authorList>
    </citation>
    <scope>NUCLEOTIDE SEQUENCE [LARGE SCALE GENOMIC DNA]</scope>
    <source>
        <strain>ATCC 29148 / DSM 2079 / JCM 5827 / CCUG 10774 / NCTC 10582 / VPI-5482 / E50</strain>
    </source>
</reference>
<evidence type="ECO:0000255" key="1">
    <source>
        <dbReference type="HAMAP-Rule" id="MF_01309"/>
    </source>
</evidence>
<evidence type="ECO:0000256" key="2">
    <source>
        <dbReference type="SAM" id="MobiDB-lite"/>
    </source>
</evidence>
<evidence type="ECO:0000305" key="3"/>
<gene>
    <name evidence="1" type="primary">rpsC</name>
    <name type="ordered locus">BT_2721</name>
</gene>
<organism>
    <name type="scientific">Bacteroides thetaiotaomicron (strain ATCC 29148 / DSM 2079 / JCM 5827 / CCUG 10774 / NCTC 10582 / VPI-5482 / E50)</name>
    <dbReference type="NCBI Taxonomy" id="226186"/>
    <lineage>
        <taxon>Bacteria</taxon>
        <taxon>Pseudomonadati</taxon>
        <taxon>Bacteroidota</taxon>
        <taxon>Bacteroidia</taxon>
        <taxon>Bacteroidales</taxon>
        <taxon>Bacteroidaceae</taxon>
        <taxon>Bacteroides</taxon>
    </lineage>
</organism>
<name>RS3_BACTN</name>
<proteinExistence type="inferred from homology"/>
<keyword id="KW-1185">Reference proteome</keyword>
<keyword id="KW-0687">Ribonucleoprotein</keyword>
<keyword id="KW-0689">Ribosomal protein</keyword>
<keyword id="KW-0694">RNA-binding</keyword>
<keyword id="KW-0699">rRNA-binding</keyword>
<dbReference type="EMBL" id="AE015928">
    <property type="protein sequence ID" value="AAO77827.1"/>
    <property type="molecule type" value="Genomic_DNA"/>
</dbReference>
<dbReference type="RefSeq" id="NP_811633.1">
    <property type="nucleotide sequence ID" value="NC_004663.1"/>
</dbReference>
<dbReference type="RefSeq" id="WP_008762038.1">
    <property type="nucleotide sequence ID" value="NZ_UYXG01000001.1"/>
</dbReference>
<dbReference type="SMR" id="Q8A482"/>
<dbReference type="FunCoup" id="Q8A482">
    <property type="interactions" value="671"/>
</dbReference>
<dbReference type="STRING" id="226186.BT_2721"/>
<dbReference type="PaxDb" id="226186-BT_2721"/>
<dbReference type="EnsemblBacteria" id="AAO77827">
    <property type="protein sequence ID" value="AAO77827"/>
    <property type="gene ID" value="BT_2721"/>
</dbReference>
<dbReference type="GeneID" id="69587581"/>
<dbReference type="KEGG" id="bth:BT_2721"/>
<dbReference type="PATRIC" id="fig|226186.12.peg.2764"/>
<dbReference type="eggNOG" id="COG0092">
    <property type="taxonomic scope" value="Bacteria"/>
</dbReference>
<dbReference type="HOGENOM" id="CLU_058591_0_2_10"/>
<dbReference type="InParanoid" id="Q8A482"/>
<dbReference type="OrthoDB" id="9806396at2"/>
<dbReference type="Proteomes" id="UP000001414">
    <property type="component" value="Chromosome"/>
</dbReference>
<dbReference type="GO" id="GO:0022627">
    <property type="term" value="C:cytosolic small ribosomal subunit"/>
    <property type="evidence" value="ECO:0000318"/>
    <property type="project" value="GO_Central"/>
</dbReference>
<dbReference type="GO" id="GO:0003729">
    <property type="term" value="F:mRNA binding"/>
    <property type="evidence" value="ECO:0007669"/>
    <property type="project" value="UniProtKB-UniRule"/>
</dbReference>
<dbReference type="GO" id="GO:0019843">
    <property type="term" value="F:rRNA binding"/>
    <property type="evidence" value="ECO:0007669"/>
    <property type="project" value="UniProtKB-UniRule"/>
</dbReference>
<dbReference type="GO" id="GO:0003735">
    <property type="term" value="F:structural constituent of ribosome"/>
    <property type="evidence" value="ECO:0000318"/>
    <property type="project" value="GO_Central"/>
</dbReference>
<dbReference type="GO" id="GO:0006412">
    <property type="term" value="P:translation"/>
    <property type="evidence" value="ECO:0007669"/>
    <property type="project" value="UniProtKB-UniRule"/>
</dbReference>
<dbReference type="CDD" id="cd02412">
    <property type="entry name" value="KH-II_30S_S3"/>
    <property type="match status" value="1"/>
</dbReference>
<dbReference type="FunFam" id="3.30.1140.32:FF:000007">
    <property type="entry name" value="30S ribosomal protein S3"/>
    <property type="match status" value="1"/>
</dbReference>
<dbReference type="FunFam" id="3.30.300.20:FF:000001">
    <property type="entry name" value="30S ribosomal protein S3"/>
    <property type="match status" value="1"/>
</dbReference>
<dbReference type="Gene3D" id="3.30.300.20">
    <property type="match status" value="1"/>
</dbReference>
<dbReference type="Gene3D" id="3.30.1140.32">
    <property type="entry name" value="Ribosomal protein S3, C-terminal domain"/>
    <property type="match status" value="1"/>
</dbReference>
<dbReference type="HAMAP" id="MF_01309_B">
    <property type="entry name" value="Ribosomal_uS3_B"/>
    <property type="match status" value="1"/>
</dbReference>
<dbReference type="InterPro" id="IPR004087">
    <property type="entry name" value="KH_dom"/>
</dbReference>
<dbReference type="InterPro" id="IPR015946">
    <property type="entry name" value="KH_dom-like_a/b"/>
</dbReference>
<dbReference type="InterPro" id="IPR004044">
    <property type="entry name" value="KH_dom_type_2"/>
</dbReference>
<dbReference type="InterPro" id="IPR009019">
    <property type="entry name" value="KH_sf_prok-type"/>
</dbReference>
<dbReference type="InterPro" id="IPR036419">
    <property type="entry name" value="Ribosomal_S3_C_sf"/>
</dbReference>
<dbReference type="InterPro" id="IPR005704">
    <property type="entry name" value="Ribosomal_uS3_bac-typ"/>
</dbReference>
<dbReference type="InterPro" id="IPR001351">
    <property type="entry name" value="Ribosomal_uS3_C"/>
</dbReference>
<dbReference type="InterPro" id="IPR018280">
    <property type="entry name" value="Ribosomal_uS3_CS"/>
</dbReference>
<dbReference type="NCBIfam" id="TIGR01009">
    <property type="entry name" value="rpsC_bact"/>
    <property type="match status" value="1"/>
</dbReference>
<dbReference type="PANTHER" id="PTHR11760">
    <property type="entry name" value="30S/40S RIBOSOMAL PROTEIN S3"/>
    <property type="match status" value="1"/>
</dbReference>
<dbReference type="PANTHER" id="PTHR11760:SF19">
    <property type="entry name" value="SMALL RIBOSOMAL SUBUNIT PROTEIN US3C"/>
    <property type="match status" value="1"/>
</dbReference>
<dbReference type="Pfam" id="PF07650">
    <property type="entry name" value="KH_2"/>
    <property type="match status" value="1"/>
</dbReference>
<dbReference type="Pfam" id="PF00189">
    <property type="entry name" value="Ribosomal_S3_C"/>
    <property type="match status" value="1"/>
</dbReference>
<dbReference type="SMART" id="SM00322">
    <property type="entry name" value="KH"/>
    <property type="match status" value="1"/>
</dbReference>
<dbReference type="SUPFAM" id="SSF54814">
    <property type="entry name" value="Prokaryotic type KH domain (KH-domain type II)"/>
    <property type="match status" value="1"/>
</dbReference>
<dbReference type="SUPFAM" id="SSF54821">
    <property type="entry name" value="Ribosomal protein S3 C-terminal domain"/>
    <property type="match status" value="1"/>
</dbReference>
<dbReference type="PROSITE" id="PS50823">
    <property type="entry name" value="KH_TYPE_2"/>
    <property type="match status" value="1"/>
</dbReference>
<dbReference type="PROSITE" id="PS00548">
    <property type="entry name" value="RIBOSOMAL_S3"/>
    <property type="match status" value="1"/>
</dbReference>
<sequence length="243" mass="27074">MGQKVNPISNRLGIIRGWDSNWYGGNDYGDSLLEDSKIRKYLNARLAKASVSRIVIERTLKLVTITVCTARPGIIIGKGGQEVDKLKEELKKVTDKDIQINIFEVKRPELDAVIVANNIARQVEGKIAYRRAIKMAIANTMRMGAEGIKIQISGRLNGAEMARSEMYKEGRTPLHTFRADIDYCHAEALTKVGLLGIKVWICRGEVFGKKELAPNFTQSKESGRGNNGGNNGGKNFKRKKNNR</sequence>
<accession>Q8A482</accession>
<feature type="chain" id="PRO_0000130074" description="Small ribosomal subunit protein uS3">
    <location>
        <begin position="1"/>
        <end position="243"/>
    </location>
</feature>
<feature type="domain" description="KH type-2" evidence="1">
    <location>
        <begin position="38"/>
        <end position="106"/>
    </location>
</feature>
<feature type="region of interest" description="Disordered" evidence="2">
    <location>
        <begin position="214"/>
        <end position="243"/>
    </location>
</feature>